<accession>P0DO30</accession>
<gene>
    <name evidence="7" type="primary">iliA</name>
</gene>
<sequence length="4036" mass="438607">MSQQRYPEPIAVIGSACRFPGASSSPSKLWSLLQEPRDVLKKFDPDRLNLKRFHHTNGDTHGATDVNNKSYLLEENTRLFDASFFGISPLEAAGMDPQQRLLLETVYESFEAAGVTLDQLKGSLTSVHVGVMTNDYSFIQLRDPETLSKYNATGTANSIMSNRISYVFDLKGPSETIDTACSSSLVALHHAAQGLLSGDCETAVVAGVNLIFDPSPYITESKLHMLSPDSQSRMWDKSANGYARGEGAAALLLKPLSRALRDGDHIEGIVRGTGVNSDGQSSGITMPFAPAQSALIRQTYLRAGLDPIKDRPQYFECHGTGTPAGDPVEARAISESLLDGETSSDNPLYVGSVKTVIGHLEGCAGLAGVIRAILALKHRTIPPNLHFKELNPAIAQYYGPLQITTKALPWPEVPAGTPARASVNSFGFGGTNAHAIIESYDNGSASSSIQAQDEQPEESSEGGLGPLIFSAASGSSLLRTVQAYLEHLREHPSVDLQDLSWLLQTRRTTHRVRTHFSGASRDTVLENMATFVTTHEKASSATIGYQPQLVNPSEAPGVLGIFTGQGAQWPAMGRELIQKSPLFRKTIEECEAILNALPEGDVPEWSLMQELTADASSSRLSEAMISQPLCTAVQLGLVNLLTAAGISFDAVVGHSSGEIAATYASGIITTKGAMQIAYYRGFHAKLATGPDGERGGMLAAGLSFEKATQFCSRPEFQGRIQVAASNAPQSVTLSGDINAIKEAKEQLDADNIFARQLKVDTAYHSHHMQPCAGPYLQSLLACDIELQAPKPGSCVWNSSVRGDAELLKRDLSSLKGTYWVANMVQTVLFSQAIESSIWHGGPFDLAIEVGPHPALKGPVEQTLKAAYGSVPMYTGALKRNGSDVEAFSAALGVTWAQLGPSFVDFSSFREAFYESQAPAPKVIKDLPTYSWDHEKDYWRESRISRRYRTGKDVGHELLGRRTPDDNDHELRWRNVLKLSEMPWVRGHEVLDEVLLPGAAYVSIAVEAGKHLATSTGKSVRLIDVENVDILRPVVVPDNQEGVETLFTAHILSSSPSEGVLRARFSYYICNDQSSGSMVHTCSGDLVVHLGADSESGDLLPPRDAVPPNLVNIDGERVYKMFEGIDLKYSGVFRSIADSKRCLNYATATGVWPEGSLSNDYGVHPAMLDVAFQTLFIARAHPASRQITSALLPSHIDRVRVSPSVQILQPEGGGDIKAAFESWVVGQTATSLTGDLNVYDAETGKTFLQVEGLATNMVGEQDASHDQPIFSKTVWGRYDSVGLADPVRDAVKDAEATRLAEDIERVALFYIKRIVNQIGADERAGFQWYHQRMFGAFEKHLATIKNDEHPVLPSNWLADEPSVLEDISNAHPDSIDLQLLHAVGENLADVVRGDTQLLEVMQEDDMLDRFYMDNCASAPINQSIADVLQQITFKFPRCNILEIGAGTGGTTWSVLNSINNAYDSYTYTDISSGFFPNAAEKFSDFSNKMAFKILDVEKDPTTQGFVEESYDVIIAANVLHATRSLETTLRNVRSLLKPGGFLVLMEVTGMQSVRVTFILGGLPGWWLGADDGRPLGPGVSVVDWDVLFDKTGFSGADTVMHDLEDDTKHCNSLIVTQAVDDAFLRMREPLSFMAELPPLTEPLLVIGGKKLTTTKMMSEIQKLLPRSWKRHVQTVGSIDEIDTAKLIPRMDVICLQEADEPLFATPMTAKRIALLKSLLMSARNMLWVTGAGKSHTPRTSIFLGIARIVPSELPQLNLQMLGLESGASHSVAARNCVEAFLRLRATEEGNGSHMLWSQEPEMEILADGQTMVPRVMPNKPLNELYNASRRAVTKTIDATDVPVRAVAGPGKMTLQAAELQDASAQRARVQVKYALHIPSVNGKQVYLVCGHRQGSESATPVMAISESNGTIVEVDLERLITIDEDGCTPGVLAATANHLLVRAIATLASGARKVLLYQAEESLAAMVATEIAAQGGEAHFASSSSDAPDSWIKIHVNSSKRALSRVVPRDVQLYVDCSGYSQSAVSSVSSASDTLRACVPADCVAQQLGGGLLQEAFQRMDAGGSTLFKDSYAKAKSSFSENQEQILDCDLVKAADLAGADASSLTRKRYVTDWQEKESLTLTIQPLDLQGIFKPDKTYFMVGMAGGLGLSICQWMIRNGAKHLVITSRNPKIDDSLLEDARRANAKLHVMTMDVSKRDSVEKVVRLVQDTLPPIAGVCNAAMVLSDKLFIDMDVDQLNNTLAAKVYGTEHLDSVFDDMPLDFFVLLSSVATVIGNIGQANYHAANLFMTSLIAQRRARGLTGSVVHVGYISDVGYVTRQDRDRQLDQHFRNVRLMPLSETDVHHAFAEAIRGGKPGSVSGAHDIIMGLETFKEPLAPEKQPLWLANPRFAHFMPPTMLQTQQQHRGSGSADNVRKQVEEAETEDEAVAAVVKAFCSKLESILQLQEDSVNIQRAIIDLGIDSLVAVEIRTWFLKELGAEVAVVKILGGDTVIQVCTWATKKVMAINMKKKEAAQLDEAAAEKTATAATPAPAPDAAPAPAAPTKTASLTVPVENTSRTPESNSASVSDADDSESSGAVSKLGTSISGSSYAKMEFGDADARSESTGSSGMADSDDSSNRPETIREEIMSQAQSRIWFLSKHLEDPAAFNMTFHYRAQGPLSMARLRHALQVTTHHHECLRMRFYPRLGDGQPMQGVMGSSLYELEHIPDANDSDVKNELARFKTRVWDLENGKTFGVTVLSHSAEEHDIIYGYHHLVMDVVGWHVFVHDLDKAYKMQSLDKSAGSYFDYTSLQLEQEKAGVLEEDLKYWQAEFTTTPETLPLLPMAHTIVRPAEPGNESHHEYQELTSGQFTALKETCQRLRISPFHFHVAVMQVLLARYANTEDVCIGIVDANRNDARFAQTVGCFINMLPVRSHVSSHDSFANVARAASKKALAAFAHSAVPFDMILDKVKAPRSSASTPLFQAAVNYRTGSVWELPLGDCQMKLAGAKDADNPYDISLGITDMGSGCMIEIHCQASLYTSEGCRTILDSYVRLLESFAANPHLDITECEIYDKSQVGQALELGKGPEMEFGWPSTMSQRVLDMCSLHSDKSAVKDNTITLSYSNLASRVNAVADAILQAGCTAGSHVAVLCEPTVDATVAMLAVLHVGAVYVPLDTSLPTARHAAMVQSSRPALLLSHSATEGLVRDLGNELDSPIRQVRIDSISEEARQEVPCAAERGAPAVLLFTSGSTGTPKGIFLSQANFVNHLALKIHVLGFGQECVLQQSSLGFDMSLIQTFCALANGGLLVIVPSEMRRDPVELTGLLSRERISLTIATPSEYLAWLRYGEASLTENTAWRHACMGGEQVSRQLKSELRRVNLSGLRLTNCYGPTEITAAATFQAIDLEEKQDEDERAKFAVGKALPNYSVCILDASGQPQPAQHAGEICIGGAGVALGYLNLADETARKFIADVTSTADRRMYRTGDQGRLLSDGTLLCLGRLDGDTQVKLRGLRIELQEVESALLQAADGLLSTAVVSQRGDVLVAHATLSPGRDNASEEELTQVLGHLRLPQYFIPAAIIILAAMPTNSNGKLDRKAIGALSLPERGSNGTQEKMTIREGEVRLLWERVLPDTSTTGRLAPSSDFFLCGGNSLLMMKLQAAIRESIGVAISTRTLYQASTLREMARRIDEHQTAEGDDTEREIDWAAETTVPKALLRQIRELPAPVKSSKSDGIEVLMTGATSFLGGHLLQALLRSPVVRKVHCVAVLADDQHQLPRDEKIECYTGSLLSSTLGLNADERDRLEQTVDVIIHAGSSGHCLNTYDSLRTPNLLSTHFLSSLALPRSIPLLLLSSNRVVLLSGSTAPPPGSVAAFAPATDGLEGYTASKWASESFLENLVAHMQQVSRSPLTVAVHRPCVVVSEQAPNSDALNAILRYSVSMRCVPQLDNVEGYLDFGKVEKIVDEIADSALQLAQAGSQDQEIRFRHHSGGAKVPVREFRAHMEDIYGGSFDEVDVTEWMRRAADAGIDPLITAYLEGILDSGSPMVFPYLGEE</sequence>
<protein>
    <recommendedName>
        <fullName evidence="7">Hybrid PKS-NRPS synthetase iliA</fullName>
        <shortName evidence="7">PKS-NRPS iliA</shortName>
        <ecNumber evidence="6">2.3.1.-</ecNumber>
        <ecNumber evidence="6">6.3.2.-</ecNumber>
    </recommendedName>
    <alternativeName>
        <fullName evidence="7">Ilicicolin H biosynthesis cluster protein A</fullName>
    </alternativeName>
</protein>
<evidence type="ECO:0000255" key="1"/>
<evidence type="ECO:0000255" key="2">
    <source>
        <dbReference type="PROSITE-ProRule" id="PRU00258"/>
    </source>
</evidence>
<evidence type="ECO:0000255" key="3">
    <source>
        <dbReference type="PROSITE-ProRule" id="PRU01348"/>
    </source>
</evidence>
<evidence type="ECO:0000255" key="4">
    <source>
        <dbReference type="PROSITE-ProRule" id="PRU01363"/>
    </source>
</evidence>
<evidence type="ECO:0000256" key="5">
    <source>
        <dbReference type="SAM" id="MobiDB-lite"/>
    </source>
</evidence>
<evidence type="ECO:0000269" key="6">
    <source>
    </source>
</evidence>
<evidence type="ECO:0000303" key="7">
    <source>
    </source>
</evidence>
<evidence type="ECO:0000305" key="8"/>
<evidence type="ECO:0000305" key="9">
    <source>
    </source>
</evidence>
<feature type="chain" id="PRO_0000453067" description="Hybrid PKS-NRPS synthetase iliA">
    <location>
        <begin position="1"/>
        <end position="4036"/>
    </location>
</feature>
<feature type="domain" description="Ketosynthase family 3 (KS3)" evidence="3 9">
    <location>
        <begin position="7"/>
        <end position="439"/>
    </location>
</feature>
<feature type="domain" description="PKS/mFAS DH" evidence="4">
    <location>
        <begin position="955"/>
        <end position="1263"/>
    </location>
</feature>
<feature type="domain" description="Carrier 1" evidence="2">
    <location>
        <begin position="2425"/>
        <end position="2502"/>
    </location>
</feature>
<feature type="domain" description="Carrier 2" evidence="2">
    <location>
        <begin position="3596"/>
        <end position="3675"/>
    </location>
</feature>
<feature type="region of interest" description="Malonyl-CoA:ACP transacylase (MAT) domain" evidence="1 9">
    <location>
        <begin position="561"/>
        <end position="886"/>
    </location>
</feature>
<feature type="region of interest" description="Dehydratase (DH) domain" evidence="1 9">
    <location>
        <begin position="955"/>
        <end position="1262"/>
    </location>
</feature>
<feature type="region of interest" description="N-terminal hotdog fold" evidence="4">
    <location>
        <begin position="955"/>
        <end position="1092"/>
    </location>
</feature>
<feature type="region of interest" description="C-terminal hotdog fold" evidence="4">
    <location>
        <begin position="1109"/>
        <end position="1263"/>
    </location>
</feature>
<feature type="region of interest" description="Methyltransferase (MT) domain" evidence="1 9">
    <location>
        <begin position="1402"/>
        <end position="1601"/>
    </location>
</feature>
<feature type="region of interest" description="Ketoreductase (KR) domain" evidence="1 9">
    <location>
        <begin position="2136"/>
        <end position="2277"/>
    </location>
</feature>
<feature type="region of interest" description="Disordered" evidence="5">
    <location>
        <begin position="2520"/>
        <end position="2583"/>
    </location>
</feature>
<feature type="region of interest" description="Disordered" evidence="5">
    <location>
        <begin position="2597"/>
        <end position="2621"/>
    </location>
</feature>
<feature type="region of interest" description="Condensation (C) domain" evidence="1 9">
    <location>
        <begin position="2627"/>
        <end position="3054"/>
    </location>
</feature>
<feature type="region of interest" description="Adenylation (A) (KR) domain" evidence="1 9">
    <location>
        <begin position="3088"/>
        <end position="3485"/>
    </location>
</feature>
<feature type="region of interest" description="Reductase (RED) domain" evidence="1 9">
    <location>
        <begin position="3088"/>
        <end position="3485"/>
    </location>
</feature>
<feature type="compositionally biased region" description="Pro residues" evidence="5">
    <location>
        <begin position="2530"/>
        <end position="2540"/>
    </location>
</feature>
<feature type="active site" description="For beta-ketoacyl synthase activity" evidence="3">
    <location>
        <position position="181"/>
    </location>
</feature>
<feature type="active site" description="For beta-ketoacyl synthase activity" evidence="3">
    <location>
        <position position="318"/>
    </location>
</feature>
<feature type="active site" description="For beta-ketoacyl synthase activity" evidence="3">
    <location>
        <position position="359"/>
    </location>
</feature>
<feature type="active site" description="Proton acceptor; for dehydratase activity" evidence="4">
    <location>
        <position position="987"/>
    </location>
</feature>
<feature type="active site" description="Proton donor; for dehydratase activity" evidence="4">
    <location>
        <position position="1168"/>
    </location>
</feature>
<feature type="modified residue" description="O-(pantetheine 4'-phosphoryl)serine" evidence="2">
    <location>
        <position position="2462"/>
    </location>
</feature>
<feature type="modified residue" description="O-(pantetheine 4'-phosphoryl)serine" evidence="2">
    <location>
        <position position="3635"/>
    </location>
</feature>
<name>ILIA_NEOS2</name>
<keyword id="KW-0436">Ligase</keyword>
<keyword id="KW-0489">Methyltransferase</keyword>
<keyword id="KW-0511">Multifunctional enzyme</keyword>
<keyword id="KW-0560">Oxidoreductase</keyword>
<keyword id="KW-0596">Phosphopantetheine</keyword>
<keyword id="KW-0597">Phosphoprotein</keyword>
<keyword id="KW-0677">Repeat</keyword>
<keyword id="KW-0808">Transferase</keyword>
<dbReference type="EC" id="2.3.1.-" evidence="6"/>
<dbReference type="EC" id="6.3.2.-" evidence="6"/>
<dbReference type="SMR" id="P0DO30"/>
<dbReference type="GO" id="GO:0004315">
    <property type="term" value="F:3-oxoacyl-[acyl-carrier-protein] synthase activity"/>
    <property type="evidence" value="ECO:0007669"/>
    <property type="project" value="InterPro"/>
</dbReference>
<dbReference type="GO" id="GO:0004312">
    <property type="term" value="F:fatty acid synthase activity"/>
    <property type="evidence" value="ECO:0007669"/>
    <property type="project" value="TreeGrafter"/>
</dbReference>
<dbReference type="GO" id="GO:0016874">
    <property type="term" value="F:ligase activity"/>
    <property type="evidence" value="ECO:0007669"/>
    <property type="project" value="UniProtKB-KW"/>
</dbReference>
<dbReference type="GO" id="GO:0008168">
    <property type="term" value="F:methyltransferase activity"/>
    <property type="evidence" value="ECO:0007669"/>
    <property type="project" value="UniProtKB-KW"/>
</dbReference>
<dbReference type="GO" id="GO:1904091">
    <property type="term" value="F:non-ribosomal peptide synthetase activity"/>
    <property type="evidence" value="ECO:0000314"/>
    <property type="project" value="UniProt"/>
</dbReference>
<dbReference type="GO" id="GO:0016491">
    <property type="term" value="F:oxidoreductase activity"/>
    <property type="evidence" value="ECO:0000314"/>
    <property type="project" value="UniProt"/>
</dbReference>
<dbReference type="GO" id="GO:0031177">
    <property type="term" value="F:phosphopantetheine binding"/>
    <property type="evidence" value="ECO:0007669"/>
    <property type="project" value="InterPro"/>
</dbReference>
<dbReference type="GO" id="GO:0016218">
    <property type="term" value="F:polyketide synthase activity"/>
    <property type="evidence" value="ECO:0000314"/>
    <property type="project" value="UniProt"/>
</dbReference>
<dbReference type="GO" id="GO:0006633">
    <property type="term" value="P:fatty acid biosynthetic process"/>
    <property type="evidence" value="ECO:0007669"/>
    <property type="project" value="InterPro"/>
</dbReference>
<dbReference type="GO" id="GO:0140781">
    <property type="term" value="P:ilicicolin H biosynthetic process"/>
    <property type="evidence" value="ECO:0000314"/>
    <property type="project" value="GO_Central"/>
</dbReference>
<dbReference type="GO" id="GO:0032259">
    <property type="term" value="P:methylation"/>
    <property type="evidence" value="ECO:0007669"/>
    <property type="project" value="UniProtKB-KW"/>
</dbReference>
<dbReference type="CDD" id="cd05930">
    <property type="entry name" value="A_NRPS"/>
    <property type="match status" value="1"/>
</dbReference>
<dbReference type="CDD" id="cd02440">
    <property type="entry name" value="AdoMet_MTases"/>
    <property type="match status" value="1"/>
</dbReference>
<dbReference type="CDD" id="cd19532">
    <property type="entry name" value="C_PKS-NRPS"/>
    <property type="match status" value="1"/>
</dbReference>
<dbReference type="CDD" id="cd00833">
    <property type="entry name" value="PKS"/>
    <property type="match status" value="1"/>
</dbReference>
<dbReference type="FunFam" id="3.40.47.10:FF:000019">
    <property type="entry name" value="Polyketide synthase type I"/>
    <property type="match status" value="1"/>
</dbReference>
<dbReference type="Gene3D" id="3.30.300.30">
    <property type="match status" value="1"/>
</dbReference>
<dbReference type="Gene3D" id="3.40.47.10">
    <property type="match status" value="1"/>
</dbReference>
<dbReference type="Gene3D" id="1.10.1200.10">
    <property type="entry name" value="ACP-like"/>
    <property type="match status" value="2"/>
</dbReference>
<dbReference type="Gene3D" id="3.30.559.10">
    <property type="entry name" value="Chloramphenicol acetyltransferase-like domain"/>
    <property type="match status" value="1"/>
</dbReference>
<dbReference type="Gene3D" id="3.40.366.10">
    <property type="entry name" value="Malonyl-Coenzyme A Acyl Carrier Protein, domain 2"/>
    <property type="match status" value="1"/>
</dbReference>
<dbReference type="Gene3D" id="3.40.50.12780">
    <property type="entry name" value="N-terminal domain of ligase-like"/>
    <property type="match status" value="1"/>
</dbReference>
<dbReference type="Gene3D" id="3.40.50.720">
    <property type="entry name" value="NAD(P)-binding Rossmann-like Domain"/>
    <property type="match status" value="2"/>
</dbReference>
<dbReference type="Gene3D" id="3.30.559.30">
    <property type="entry name" value="Nonribosomal peptide synthetase, condensation domain"/>
    <property type="match status" value="1"/>
</dbReference>
<dbReference type="Gene3D" id="3.10.129.110">
    <property type="entry name" value="Polyketide synthase dehydratase"/>
    <property type="match status" value="1"/>
</dbReference>
<dbReference type="Gene3D" id="3.40.50.150">
    <property type="entry name" value="Vaccinia Virus protein VP39"/>
    <property type="match status" value="1"/>
</dbReference>
<dbReference type="InterPro" id="IPR010071">
    <property type="entry name" value="AA_adenyl_dom"/>
</dbReference>
<dbReference type="InterPro" id="IPR001227">
    <property type="entry name" value="Ac_transferase_dom_sf"/>
</dbReference>
<dbReference type="InterPro" id="IPR036736">
    <property type="entry name" value="ACP-like_sf"/>
</dbReference>
<dbReference type="InterPro" id="IPR014043">
    <property type="entry name" value="Acyl_transferase_dom"/>
</dbReference>
<dbReference type="InterPro" id="IPR016035">
    <property type="entry name" value="Acyl_Trfase/lysoPLipase"/>
</dbReference>
<dbReference type="InterPro" id="IPR045851">
    <property type="entry name" value="AMP-bd_C_sf"/>
</dbReference>
<dbReference type="InterPro" id="IPR020845">
    <property type="entry name" value="AMP-binding_CS"/>
</dbReference>
<dbReference type="InterPro" id="IPR000873">
    <property type="entry name" value="AMP-dep_synth/lig_dom"/>
</dbReference>
<dbReference type="InterPro" id="IPR042099">
    <property type="entry name" value="ANL_N_sf"/>
</dbReference>
<dbReference type="InterPro" id="IPR023213">
    <property type="entry name" value="CAT-like_dom_sf"/>
</dbReference>
<dbReference type="InterPro" id="IPR001242">
    <property type="entry name" value="Condensatn"/>
</dbReference>
<dbReference type="InterPro" id="IPR013120">
    <property type="entry name" value="Far_NAD-bd"/>
</dbReference>
<dbReference type="InterPro" id="IPR018201">
    <property type="entry name" value="Ketoacyl_synth_AS"/>
</dbReference>
<dbReference type="InterPro" id="IPR014031">
    <property type="entry name" value="Ketoacyl_synth_C"/>
</dbReference>
<dbReference type="InterPro" id="IPR014030">
    <property type="entry name" value="Ketoacyl_synth_N"/>
</dbReference>
<dbReference type="InterPro" id="IPR016036">
    <property type="entry name" value="Malonyl_transacylase_ACP-bd"/>
</dbReference>
<dbReference type="InterPro" id="IPR013217">
    <property type="entry name" value="Methyltransf_12"/>
</dbReference>
<dbReference type="InterPro" id="IPR036291">
    <property type="entry name" value="NAD(P)-bd_dom_sf"/>
</dbReference>
<dbReference type="InterPro" id="IPR032821">
    <property type="entry name" value="PKS_assoc"/>
</dbReference>
<dbReference type="InterPro" id="IPR020841">
    <property type="entry name" value="PKS_Beta-ketoAc_synthase_dom"/>
</dbReference>
<dbReference type="InterPro" id="IPR042104">
    <property type="entry name" value="PKS_dehydratase_sf"/>
</dbReference>
<dbReference type="InterPro" id="IPR020807">
    <property type="entry name" value="PKS_DH"/>
</dbReference>
<dbReference type="InterPro" id="IPR049551">
    <property type="entry name" value="PKS_DH_C"/>
</dbReference>
<dbReference type="InterPro" id="IPR049552">
    <property type="entry name" value="PKS_DH_N"/>
</dbReference>
<dbReference type="InterPro" id="IPR013968">
    <property type="entry name" value="PKS_KR"/>
</dbReference>
<dbReference type="InterPro" id="IPR049900">
    <property type="entry name" value="PKS_mFAS_DH"/>
</dbReference>
<dbReference type="InterPro" id="IPR050091">
    <property type="entry name" value="PKS_NRPS_Biosynth_Enz"/>
</dbReference>
<dbReference type="InterPro" id="IPR020806">
    <property type="entry name" value="PKS_PP-bd"/>
</dbReference>
<dbReference type="InterPro" id="IPR009081">
    <property type="entry name" value="PP-bd_ACP"/>
</dbReference>
<dbReference type="InterPro" id="IPR006162">
    <property type="entry name" value="Ppantetheine_attach_site"/>
</dbReference>
<dbReference type="InterPro" id="IPR029063">
    <property type="entry name" value="SAM-dependent_MTases_sf"/>
</dbReference>
<dbReference type="InterPro" id="IPR016039">
    <property type="entry name" value="Thiolase-like"/>
</dbReference>
<dbReference type="NCBIfam" id="TIGR01733">
    <property type="entry name" value="AA-adenyl-dom"/>
    <property type="match status" value="1"/>
</dbReference>
<dbReference type="PANTHER" id="PTHR43775">
    <property type="entry name" value="FATTY ACID SYNTHASE"/>
    <property type="match status" value="1"/>
</dbReference>
<dbReference type="PANTHER" id="PTHR43775:SF20">
    <property type="entry name" value="HYBRID PKS-NRPS SYNTHETASE APDA"/>
    <property type="match status" value="1"/>
</dbReference>
<dbReference type="Pfam" id="PF23297">
    <property type="entry name" value="ACP_SdgA_C"/>
    <property type="match status" value="1"/>
</dbReference>
<dbReference type="Pfam" id="PF00698">
    <property type="entry name" value="Acyl_transf_1"/>
    <property type="match status" value="1"/>
</dbReference>
<dbReference type="Pfam" id="PF00501">
    <property type="entry name" value="AMP-binding"/>
    <property type="match status" value="1"/>
</dbReference>
<dbReference type="Pfam" id="PF00668">
    <property type="entry name" value="Condensation"/>
    <property type="match status" value="1"/>
</dbReference>
<dbReference type="Pfam" id="PF16197">
    <property type="entry name" value="KAsynt_C_assoc"/>
    <property type="match status" value="1"/>
</dbReference>
<dbReference type="Pfam" id="PF00109">
    <property type="entry name" value="ketoacyl-synt"/>
    <property type="match status" value="1"/>
</dbReference>
<dbReference type="Pfam" id="PF02801">
    <property type="entry name" value="Ketoacyl-synt_C"/>
    <property type="match status" value="1"/>
</dbReference>
<dbReference type="Pfam" id="PF08659">
    <property type="entry name" value="KR"/>
    <property type="match status" value="1"/>
</dbReference>
<dbReference type="Pfam" id="PF08242">
    <property type="entry name" value="Methyltransf_12"/>
    <property type="match status" value="1"/>
</dbReference>
<dbReference type="Pfam" id="PF07993">
    <property type="entry name" value="NAD_binding_4"/>
    <property type="match status" value="1"/>
</dbReference>
<dbReference type="Pfam" id="PF21089">
    <property type="entry name" value="PKS_DH_N"/>
    <property type="match status" value="1"/>
</dbReference>
<dbReference type="Pfam" id="PF00550">
    <property type="entry name" value="PP-binding"/>
    <property type="match status" value="1"/>
</dbReference>
<dbReference type="Pfam" id="PF14765">
    <property type="entry name" value="PS-DH"/>
    <property type="match status" value="1"/>
</dbReference>
<dbReference type="SMART" id="SM00827">
    <property type="entry name" value="PKS_AT"/>
    <property type="match status" value="1"/>
</dbReference>
<dbReference type="SMART" id="SM00826">
    <property type="entry name" value="PKS_DH"/>
    <property type="match status" value="1"/>
</dbReference>
<dbReference type="SMART" id="SM00822">
    <property type="entry name" value="PKS_KR"/>
    <property type="match status" value="1"/>
</dbReference>
<dbReference type="SMART" id="SM00825">
    <property type="entry name" value="PKS_KS"/>
    <property type="match status" value="1"/>
</dbReference>
<dbReference type="SMART" id="SM00823">
    <property type="entry name" value="PKS_PP"/>
    <property type="match status" value="2"/>
</dbReference>
<dbReference type="SUPFAM" id="SSF56801">
    <property type="entry name" value="Acetyl-CoA synthetase-like"/>
    <property type="match status" value="1"/>
</dbReference>
<dbReference type="SUPFAM" id="SSF47336">
    <property type="entry name" value="ACP-like"/>
    <property type="match status" value="2"/>
</dbReference>
<dbReference type="SUPFAM" id="SSF52777">
    <property type="entry name" value="CoA-dependent acyltransferases"/>
    <property type="match status" value="2"/>
</dbReference>
<dbReference type="SUPFAM" id="SSF52151">
    <property type="entry name" value="FabD/lysophospholipase-like"/>
    <property type="match status" value="1"/>
</dbReference>
<dbReference type="SUPFAM" id="SSF51735">
    <property type="entry name" value="NAD(P)-binding Rossmann-fold domains"/>
    <property type="match status" value="2"/>
</dbReference>
<dbReference type="SUPFAM" id="SSF55048">
    <property type="entry name" value="Probable ACP-binding domain of malonyl-CoA ACP transacylase"/>
    <property type="match status" value="1"/>
</dbReference>
<dbReference type="SUPFAM" id="SSF53335">
    <property type="entry name" value="S-adenosyl-L-methionine-dependent methyltransferases"/>
    <property type="match status" value="1"/>
</dbReference>
<dbReference type="SUPFAM" id="SSF53901">
    <property type="entry name" value="Thiolase-like"/>
    <property type="match status" value="1"/>
</dbReference>
<dbReference type="PROSITE" id="PS00455">
    <property type="entry name" value="AMP_BINDING"/>
    <property type="match status" value="1"/>
</dbReference>
<dbReference type="PROSITE" id="PS50075">
    <property type="entry name" value="CARRIER"/>
    <property type="match status" value="2"/>
</dbReference>
<dbReference type="PROSITE" id="PS00606">
    <property type="entry name" value="KS3_1"/>
    <property type="match status" value="1"/>
</dbReference>
<dbReference type="PROSITE" id="PS52004">
    <property type="entry name" value="KS3_2"/>
    <property type="match status" value="1"/>
</dbReference>
<dbReference type="PROSITE" id="PS00012">
    <property type="entry name" value="PHOSPHOPANTETHEINE"/>
    <property type="match status" value="1"/>
</dbReference>
<dbReference type="PROSITE" id="PS52019">
    <property type="entry name" value="PKS_MFAS_DH"/>
    <property type="match status" value="1"/>
</dbReference>
<organism>
    <name type="scientific">Neonectria sp. (strain DH2)</name>
    <dbReference type="NCBI Taxonomy" id="1735992"/>
    <lineage>
        <taxon>Eukaryota</taxon>
        <taxon>Fungi</taxon>
        <taxon>Dikarya</taxon>
        <taxon>Ascomycota</taxon>
        <taxon>Pezizomycotina</taxon>
        <taxon>Sordariomycetes</taxon>
        <taxon>Hypocreomycetidae</taxon>
        <taxon>Hypocreales</taxon>
        <taxon>Nectriaceae</taxon>
        <taxon>Neonectria</taxon>
    </lineage>
</organism>
<comment type="function">
    <text evidence="6 9">Hybrid PKS-NRPS synthetase; part of the gene cluster that mediates the biosynthesis of ilicicolin H, a 4-hydroxy-2-pyridonealkaloid that has potent and broad antifungal activities by inhibiting the mitochondrial respiration chain (PubMed:31216742). IliA assembles the backbone of ilicicolin H (PubMed:31216742). The PKS portion and trans-acting enoyl reductase iliB work together to construct an octaketide, and two methyl groups are introduced by the MT domain during the chain assembly (PubMed:31216742). The nascent chain is then condensed with tyrosine, catalyzed by the C domain, and the resulting PKS-NRPS hybrid is offloaded by the RED domain to form an advanced tetramic acid intermediate (PubMed:31216742). The biosynthesis of ilicicolin H starts with formation of the tetramic acid by the hybrid PKS-NRPS synthetase iliA with the partnering trans-enoyl reductase iliB since iliA lacks a designated enoylreductase (ER) domain. The cytochrome P450 monooxygenase iliC then catalyzes the ring expansion of the tetramate to the acyclic 2-pyridone. The pericyclase iliD further converts the acyclic 2-pyridone into 8-epi-ilicicolin H. 8-epi-ilicicolin H might then spontaneously convert to ilicicolin H, since ilicicolin H is produced in the absence of the epimerase iliE, in contrast to what was observed for the Talaromyces variabilis ilicolin H biosynthetic pathway (Probable) (PubMed:31216742).</text>
</comment>
<comment type="catalytic activity">
    <reaction evidence="6">
        <text>L-tyrosine + holo-[ACP] + 7 malonyl-CoA + acetyl-CoA + 8 AH2 + 2 S-adenosyl-L-methionine + ATP + 4 H(+) = N-[(4E,6E,10S,12Z,14E)-6,10-dimethyl-3-oxohexadeca-4,6,12,14-tetraenoyl]-L-tyrosyl-[ACP] + 8 A + AMP + 2 S-adenosyl-L-homocysteine + 7 CO2 + diphosphate + 8 CoA + 6 H2O</text>
        <dbReference type="Rhea" id="RHEA:64544"/>
        <dbReference type="Rhea" id="RHEA-COMP:9685"/>
        <dbReference type="Rhea" id="RHEA-COMP:16623"/>
        <dbReference type="ChEBI" id="CHEBI:13193"/>
        <dbReference type="ChEBI" id="CHEBI:15377"/>
        <dbReference type="ChEBI" id="CHEBI:15378"/>
        <dbReference type="ChEBI" id="CHEBI:16526"/>
        <dbReference type="ChEBI" id="CHEBI:17499"/>
        <dbReference type="ChEBI" id="CHEBI:30616"/>
        <dbReference type="ChEBI" id="CHEBI:33019"/>
        <dbReference type="ChEBI" id="CHEBI:57287"/>
        <dbReference type="ChEBI" id="CHEBI:57288"/>
        <dbReference type="ChEBI" id="CHEBI:57384"/>
        <dbReference type="ChEBI" id="CHEBI:57856"/>
        <dbReference type="ChEBI" id="CHEBI:58315"/>
        <dbReference type="ChEBI" id="CHEBI:59789"/>
        <dbReference type="ChEBI" id="CHEBI:64479"/>
        <dbReference type="ChEBI" id="CHEBI:155893"/>
        <dbReference type="ChEBI" id="CHEBI:456215"/>
    </reaction>
    <physiologicalReaction direction="left-to-right" evidence="6">
        <dbReference type="Rhea" id="RHEA:64545"/>
    </physiologicalReaction>
</comment>
<comment type="pathway">
    <text evidence="6">Mycotoxin biosynthesis.</text>
</comment>
<comment type="domain">
    <text evidence="9">IliA has the following domain architecture: KS-MAT-DH-MT-KR-ACP-C-A-T-R. The PKS module (domains KS to ACP) is responsible for the biosynthesis of the polyketide chain and catalyzes three Claisen condensations, as well as beta-keto processing and methylation. The downstream NRPS module contains the condensation (C), adenylation (A), and thiolation (T) domains and catalyzes the formation of the L-tyrosinyl-thioester and the amide linkage between L-tyrosinyl-thioester and the tetraketide. The bimodular assembly line is terminated with a putative reductase (R) domain that facilitates formation and release of the tetramic acid product.</text>
</comment>
<comment type="similarity">
    <text evidence="8">In the C-terminal section; belongs to the NRP synthetase family.</text>
</comment>
<proteinExistence type="evidence at protein level"/>
<reference key="1">
    <citation type="journal article" date="2019" name="Molecules">
        <title>Heterologous expression of ilicicolin H biosynthetic gene cluster and production of a new potent antifungal reagent, ilicicolin J.</title>
        <authorList>
            <person name="Lin X."/>
            <person name="Yuan S."/>
            <person name="Chen S."/>
            <person name="Chen B."/>
            <person name="Xu H."/>
            <person name="Liu L."/>
            <person name="Li H."/>
            <person name="Gao Z."/>
        </authorList>
    </citation>
    <scope>NUCLEOTIDE SEQUENCE [LARGE SCALE GENOMIC DNA]</scope>
    <scope>FUNCTION</scope>
    <scope>CATALYTIC ACTIVITY</scope>
    <scope>PATHWAY</scope>
</reference>